<name>CCSE1_MOUSE</name>
<feature type="chain" id="PRO_0000349293" description="Serine-rich coiled-coil domain-containing protein 1">
    <location>
        <begin position="1"/>
        <end position="895"/>
    </location>
</feature>
<feature type="region of interest" description="Disordered" evidence="2">
    <location>
        <begin position="1"/>
        <end position="142"/>
    </location>
</feature>
<feature type="region of interest" description="Disordered" evidence="2">
    <location>
        <begin position="154"/>
        <end position="177"/>
    </location>
</feature>
<feature type="region of interest" description="Disordered" evidence="2">
    <location>
        <begin position="332"/>
        <end position="394"/>
    </location>
</feature>
<feature type="region of interest" description="Disordered" evidence="2">
    <location>
        <begin position="459"/>
        <end position="497"/>
    </location>
</feature>
<feature type="region of interest" description="Disordered" evidence="2">
    <location>
        <begin position="731"/>
        <end position="753"/>
    </location>
</feature>
<feature type="coiled-coil region" evidence="1">
    <location>
        <begin position="675"/>
        <end position="705"/>
    </location>
</feature>
<feature type="compositionally biased region" description="Low complexity" evidence="2">
    <location>
        <begin position="43"/>
        <end position="56"/>
    </location>
</feature>
<feature type="compositionally biased region" description="Polar residues" evidence="2">
    <location>
        <begin position="83"/>
        <end position="102"/>
    </location>
</feature>
<feature type="compositionally biased region" description="Basic and acidic residues" evidence="2">
    <location>
        <begin position="131"/>
        <end position="142"/>
    </location>
</feature>
<feature type="compositionally biased region" description="Polar residues" evidence="2">
    <location>
        <begin position="348"/>
        <end position="358"/>
    </location>
</feature>
<feature type="splice variant" id="VSP_035320" description="In isoform 2." evidence="3 4">
    <original>VLASSLSPYREGRYIERRLRSSSEGTAGSSRMVLKPKDGHVEASSL</original>
    <variation>GMQIFLVQKLCTLIFILFEQLFLRHIVNERHVSFVFIISVKSLLWF</variation>
    <location>
        <begin position="440"/>
        <end position="485"/>
    </location>
</feature>
<feature type="splice variant" id="VSP_035321" description="In isoform 2." evidence="3 4">
    <location>
        <begin position="486"/>
        <end position="895"/>
    </location>
</feature>
<feature type="splice variant" id="VSP_035322" description="In isoform 3." evidence="4">
    <original>GLSLKRLEAVQGGRETTHRNRTM</original>
    <variation>TNLKHLGAFRRIIPGINGIPNSY</variation>
    <location>
        <begin position="721"/>
        <end position="743"/>
    </location>
</feature>
<feature type="splice variant" id="VSP_035323" description="In isoform 3." evidence="4">
    <location>
        <begin position="744"/>
        <end position="895"/>
    </location>
</feature>
<feature type="sequence conflict" description="In Ref. 1; BAC27537." evidence="5" ref="1">
    <original>G</original>
    <variation>R</variation>
    <location>
        <position position="432"/>
    </location>
</feature>
<comment type="alternative products">
    <event type="alternative splicing"/>
    <isoform>
        <id>Q8C0C4-1</id>
        <name>1</name>
        <sequence type="displayed"/>
    </isoform>
    <isoform>
        <id>Q8C0C4-2</id>
        <name>2</name>
        <sequence type="described" ref="VSP_035320 VSP_035321"/>
    </isoform>
    <isoform>
        <id>Q8C0C4-3</id>
        <name>3</name>
        <sequence type="described" ref="VSP_035322 VSP_035323"/>
    </isoform>
</comment>
<comment type="similarity">
    <text evidence="5">Belongs to the CCSER family.</text>
</comment>
<comment type="sequence caution" evidence="5">
    <conflict type="erroneous initiation">
        <sequence resource="EMBL-CDS" id="BAD32509"/>
    </conflict>
</comment>
<reference key="1">
    <citation type="journal article" date="2005" name="Science">
        <title>The transcriptional landscape of the mammalian genome.</title>
        <authorList>
            <person name="Carninci P."/>
            <person name="Kasukawa T."/>
            <person name="Katayama S."/>
            <person name="Gough J."/>
            <person name="Frith M.C."/>
            <person name="Maeda N."/>
            <person name="Oyama R."/>
            <person name="Ravasi T."/>
            <person name="Lenhard B."/>
            <person name="Wells C."/>
            <person name="Kodzius R."/>
            <person name="Shimokawa K."/>
            <person name="Bajic V.B."/>
            <person name="Brenner S.E."/>
            <person name="Batalov S."/>
            <person name="Forrest A.R."/>
            <person name="Zavolan M."/>
            <person name="Davis M.J."/>
            <person name="Wilming L.G."/>
            <person name="Aidinis V."/>
            <person name="Allen J.E."/>
            <person name="Ambesi-Impiombato A."/>
            <person name="Apweiler R."/>
            <person name="Aturaliya R.N."/>
            <person name="Bailey T.L."/>
            <person name="Bansal M."/>
            <person name="Baxter L."/>
            <person name="Beisel K.W."/>
            <person name="Bersano T."/>
            <person name="Bono H."/>
            <person name="Chalk A.M."/>
            <person name="Chiu K.P."/>
            <person name="Choudhary V."/>
            <person name="Christoffels A."/>
            <person name="Clutterbuck D.R."/>
            <person name="Crowe M.L."/>
            <person name="Dalla E."/>
            <person name="Dalrymple B.P."/>
            <person name="de Bono B."/>
            <person name="Della Gatta G."/>
            <person name="di Bernardo D."/>
            <person name="Down T."/>
            <person name="Engstrom P."/>
            <person name="Fagiolini M."/>
            <person name="Faulkner G."/>
            <person name="Fletcher C.F."/>
            <person name="Fukushima T."/>
            <person name="Furuno M."/>
            <person name="Futaki S."/>
            <person name="Gariboldi M."/>
            <person name="Georgii-Hemming P."/>
            <person name="Gingeras T.R."/>
            <person name="Gojobori T."/>
            <person name="Green R.E."/>
            <person name="Gustincich S."/>
            <person name="Harbers M."/>
            <person name="Hayashi Y."/>
            <person name="Hensch T.K."/>
            <person name="Hirokawa N."/>
            <person name="Hill D."/>
            <person name="Huminiecki L."/>
            <person name="Iacono M."/>
            <person name="Ikeo K."/>
            <person name="Iwama A."/>
            <person name="Ishikawa T."/>
            <person name="Jakt M."/>
            <person name="Kanapin A."/>
            <person name="Katoh M."/>
            <person name="Kawasawa Y."/>
            <person name="Kelso J."/>
            <person name="Kitamura H."/>
            <person name="Kitano H."/>
            <person name="Kollias G."/>
            <person name="Krishnan S.P."/>
            <person name="Kruger A."/>
            <person name="Kummerfeld S.K."/>
            <person name="Kurochkin I.V."/>
            <person name="Lareau L.F."/>
            <person name="Lazarevic D."/>
            <person name="Lipovich L."/>
            <person name="Liu J."/>
            <person name="Liuni S."/>
            <person name="McWilliam S."/>
            <person name="Madan Babu M."/>
            <person name="Madera M."/>
            <person name="Marchionni L."/>
            <person name="Matsuda H."/>
            <person name="Matsuzawa S."/>
            <person name="Miki H."/>
            <person name="Mignone F."/>
            <person name="Miyake S."/>
            <person name="Morris K."/>
            <person name="Mottagui-Tabar S."/>
            <person name="Mulder N."/>
            <person name="Nakano N."/>
            <person name="Nakauchi H."/>
            <person name="Ng P."/>
            <person name="Nilsson R."/>
            <person name="Nishiguchi S."/>
            <person name="Nishikawa S."/>
            <person name="Nori F."/>
            <person name="Ohara O."/>
            <person name="Okazaki Y."/>
            <person name="Orlando V."/>
            <person name="Pang K.C."/>
            <person name="Pavan W.J."/>
            <person name="Pavesi G."/>
            <person name="Pesole G."/>
            <person name="Petrovsky N."/>
            <person name="Piazza S."/>
            <person name="Reed J."/>
            <person name="Reid J.F."/>
            <person name="Ring B.Z."/>
            <person name="Ringwald M."/>
            <person name="Rost B."/>
            <person name="Ruan Y."/>
            <person name="Salzberg S.L."/>
            <person name="Sandelin A."/>
            <person name="Schneider C."/>
            <person name="Schoenbach C."/>
            <person name="Sekiguchi K."/>
            <person name="Semple C.A."/>
            <person name="Seno S."/>
            <person name="Sessa L."/>
            <person name="Sheng Y."/>
            <person name="Shibata Y."/>
            <person name="Shimada H."/>
            <person name="Shimada K."/>
            <person name="Silva D."/>
            <person name="Sinclair B."/>
            <person name="Sperling S."/>
            <person name="Stupka E."/>
            <person name="Sugiura K."/>
            <person name="Sultana R."/>
            <person name="Takenaka Y."/>
            <person name="Taki K."/>
            <person name="Tammoja K."/>
            <person name="Tan S.L."/>
            <person name="Tang S."/>
            <person name="Taylor M.S."/>
            <person name="Tegner J."/>
            <person name="Teichmann S.A."/>
            <person name="Ueda H.R."/>
            <person name="van Nimwegen E."/>
            <person name="Verardo R."/>
            <person name="Wei C.L."/>
            <person name="Yagi K."/>
            <person name="Yamanishi H."/>
            <person name="Zabarovsky E."/>
            <person name="Zhu S."/>
            <person name="Zimmer A."/>
            <person name="Hide W."/>
            <person name="Bult C."/>
            <person name="Grimmond S.M."/>
            <person name="Teasdale R.D."/>
            <person name="Liu E.T."/>
            <person name="Brusic V."/>
            <person name="Quackenbush J."/>
            <person name="Wahlestedt C."/>
            <person name="Mattick J.S."/>
            <person name="Hume D.A."/>
            <person name="Kai C."/>
            <person name="Sasaki D."/>
            <person name="Tomaru Y."/>
            <person name="Fukuda S."/>
            <person name="Kanamori-Katayama M."/>
            <person name="Suzuki M."/>
            <person name="Aoki J."/>
            <person name="Arakawa T."/>
            <person name="Iida J."/>
            <person name="Imamura K."/>
            <person name="Itoh M."/>
            <person name="Kato T."/>
            <person name="Kawaji H."/>
            <person name="Kawagashira N."/>
            <person name="Kawashima T."/>
            <person name="Kojima M."/>
            <person name="Kondo S."/>
            <person name="Konno H."/>
            <person name="Nakano K."/>
            <person name="Ninomiya N."/>
            <person name="Nishio T."/>
            <person name="Okada M."/>
            <person name="Plessy C."/>
            <person name="Shibata K."/>
            <person name="Shiraki T."/>
            <person name="Suzuki S."/>
            <person name="Tagami M."/>
            <person name="Waki K."/>
            <person name="Watahiki A."/>
            <person name="Okamura-Oho Y."/>
            <person name="Suzuki H."/>
            <person name="Kawai J."/>
            <person name="Hayashizaki Y."/>
        </authorList>
    </citation>
    <scope>NUCLEOTIDE SEQUENCE [LARGE SCALE MRNA] (ISOFORM 2)</scope>
    <scope>NUCLEOTIDE SEQUENCE [LARGE SCALE MRNA] OF 513-895 (ISOFORM 3)</scope>
    <source>
        <strain>C57BL/6J</strain>
        <tissue>Head</tissue>
    </source>
</reference>
<reference key="2">
    <citation type="journal article" date="2009" name="PLoS Biol.">
        <title>Lineage-specific biology revealed by a finished genome assembly of the mouse.</title>
        <authorList>
            <person name="Church D.M."/>
            <person name="Goodstadt L."/>
            <person name="Hillier L.W."/>
            <person name="Zody M.C."/>
            <person name="Goldstein S."/>
            <person name="She X."/>
            <person name="Bult C.J."/>
            <person name="Agarwala R."/>
            <person name="Cherry J.L."/>
            <person name="DiCuccio M."/>
            <person name="Hlavina W."/>
            <person name="Kapustin Y."/>
            <person name="Meric P."/>
            <person name="Maglott D."/>
            <person name="Birtle Z."/>
            <person name="Marques A.C."/>
            <person name="Graves T."/>
            <person name="Zhou S."/>
            <person name="Teague B."/>
            <person name="Potamousis K."/>
            <person name="Churas C."/>
            <person name="Place M."/>
            <person name="Herschleb J."/>
            <person name="Runnheim R."/>
            <person name="Forrest D."/>
            <person name="Amos-Landgraf J."/>
            <person name="Schwartz D.C."/>
            <person name="Cheng Z."/>
            <person name="Lindblad-Toh K."/>
            <person name="Eichler E.E."/>
            <person name="Ponting C.P."/>
        </authorList>
    </citation>
    <scope>NUCLEOTIDE SEQUENCE [LARGE SCALE GENOMIC DNA]</scope>
</reference>
<reference key="3">
    <citation type="journal article" date="2004" name="Genome Res.">
        <title>The status, quality, and expansion of the NIH full-length cDNA project: the Mammalian Gene Collection (MGC).</title>
        <authorList>
            <consortium name="The MGC Project Team"/>
        </authorList>
    </citation>
    <scope>NUCLEOTIDE SEQUENCE [LARGE SCALE MRNA] (ISOFORM 2)</scope>
</reference>
<reference key="4">
    <citation type="journal article" date="2004" name="DNA Res.">
        <title>Prediction of the coding sequences of mouse homologues of KIAA gene: IV. The complete nucleotide sequences of 500 mouse KIAA-homologous cDNAs identified by screening of terminal sequences of cDNA clones randomly sampled from size-fractionated libraries.</title>
        <authorList>
            <person name="Okazaki N."/>
            <person name="Kikuno R."/>
            <person name="Ohara R."/>
            <person name="Inamoto S."/>
            <person name="Koseki H."/>
            <person name="Hiraoka S."/>
            <person name="Saga Y."/>
            <person name="Seino S."/>
            <person name="Nishimura M."/>
            <person name="Kaisho T."/>
            <person name="Hoshino K."/>
            <person name="Kitamura H."/>
            <person name="Nagase T."/>
            <person name="Ohara O."/>
            <person name="Koga H."/>
        </authorList>
    </citation>
    <scope>NUCLEOTIDE SEQUENCE [LARGE SCALE MRNA] OF 321-895 (ISOFORM 1)</scope>
    <source>
        <tissue>Fetal brain</tissue>
    </source>
</reference>
<evidence type="ECO:0000255" key="1"/>
<evidence type="ECO:0000256" key="2">
    <source>
        <dbReference type="SAM" id="MobiDB-lite"/>
    </source>
</evidence>
<evidence type="ECO:0000303" key="3">
    <source>
    </source>
</evidence>
<evidence type="ECO:0000303" key="4">
    <source>
    </source>
</evidence>
<evidence type="ECO:0000305" key="5"/>
<protein>
    <recommendedName>
        <fullName>Serine-rich coiled-coil domain-containing protein 1</fullName>
    </recommendedName>
    <alternativeName>
        <fullName>Coiled-coil serine-rich protein 1</fullName>
    </alternativeName>
</protein>
<organism>
    <name type="scientific">Mus musculus</name>
    <name type="common">Mouse</name>
    <dbReference type="NCBI Taxonomy" id="10090"/>
    <lineage>
        <taxon>Eukaryota</taxon>
        <taxon>Metazoa</taxon>
        <taxon>Chordata</taxon>
        <taxon>Craniata</taxon>
        <taxon>Vertebrata</taxon>
        <taxon>Euteleostomi</taxon>
        <taxon>Mammalia</taxon>
        <taxon>Eutheria</taxon>
        <taxon>Euarchontoglires</taxon>
        <taxon>Glires</taxon>
        <taxon>Rodentia</taxon>
        <taxon>Myomorpha</taxon>
        <taxon>Muroidea</taxon>
        <taxon>Muridae</taxon>
        <taxon>Murinae</taxon>
        <taxon>Mus</taxon>
        <taxon>Mus</taxon>
    </lineage>
</organism>
<keyword id="KW-0025">Alternative splicing</keyword>
<keyword id="KW-0175">Coiled coil</keyword>
<keyword id="KW-1185">Reference proteome</keyword>
<proteinExistence type="evidence at transcript level"/>
<dbReference type="EMBL" id="AK031754">
    <property type="protein sequence ID" value="BAC27537.1"/>
    <property type="molecule type" value="mRNA"/>
</dbReference>
<dbReference type="EMBL" id="AK048645">
    <property type="protein sequence ID" value="BAC33408.1"/>
    <property type="molecule type" value="mRNA"/>
</dbReference>
<dbReference type="EMBL" id="AC122505">
    <property type="status" value="NOT_ANNOTATED_CDS"/>
    <property type="molecule type" value="Genomic_DNA"/>
</dbReference>
<dbReference type="EMBL" id="AC103630">
    <property type="status" value="NOT_ANNOTATED_CDS"/>
    <property type="molecule type" value="Genomic_DNA"/>
</dbReference>
<dbReference type="EMBL" id="AC113320">
    <property type="status" value="NOT_ANNOTATED_CDS"/>
    <property type="molecule type" value="Genomic_DNA"/>
</dbReference>
<dbReference type="EMBL" id="AC122524">
    <property type="status" value="NOT_ANNOTATED_CDS"/>
    <property type="molecule type" value="Genomic_DNA"/>
</dbReference>
<dbReference type="EMBL" id="AC125119">
    <property type="status" value="NOT_ANNOTATED_CDS"/>
    <property type="molecule type" value="Genomic_DNA"/>
</dbReference>
<dbReference type="EMBL" id="AC137119">
    <property type="status" value="NOT_ANNOTATED_CDS"/>
    <property type="molecule type" value="Genomic_DNA"/>
</dbReference>
<dbReference type="EMBL" id="AC154007">
    <property type="status" value="NOT_ANNOTATED_CDS"/>
    <property type="molecule type" value="Genomic_DNA"/>
</dbReference>
<dbReference type="EMBL" id="AC154008">
    <property type="status" value="NOT_ANNOTATED_CDS"/>
    <property type="molecule type" value="Genomic_DNA"/>
</dbReference>
<dbReference type="EMBL" id="AC168089">
    <property type="status" value="NOT_ANNOTATED_CDS"/>
    <property type="molecule type" value="Genomic_DNA"/>
</dbReference>
<dbReference type="EMBL" id="AC174640">
    <property type="status" value="NOT_ANNOTATED_CDS"/>
    <property type="molecule type" value="Genomic_DNA"/>
</dbReference>
<dbReference type="EMBL" id="AC174778">
    <property type="status" value="NOT_ANNOTATED_CDS"/>
    <property type="molecule type" value="Genomic_DNA"/>
</dbReference>
<dbReference type="EMBL" id="BC107398">
    <property type="protein sequence ID" value="AAI07399.1"/>
    <property type="molecule type" value="mRNA"/>
</dbReference>
<dbReference type="EMBL" id="BC107399">
    <property type="protein sequence ID" value="AAI07400.1"/>
    <property type="molecule type" value="mRNA"/>
</dbReference>
<dbReference type="EMBL" id="BC117738">
    <property type="protein sequence ID" value="AAI17739.1"/>
    <property type="molecule type" value="mRNA"/>
</dbReference>
<dbReference type="EMBL" id="AK173231">
    <property type="protein sequence ID" value="BAD32509.1"/>
    <property type="status" value="ALT_INIT"/>
    <property type="molecule type" value="mRNA"/>
</dbReference>
<dbReference type="CCDS" id="CCDS51800.1">
    <molecule id="Q8C0C4-1"/>
</dbReference>
<dbReference type="RefSeq" id="NP_001157788.1">
    <molecule id="Q8C0C4-1"/>
    <property type="nucleotide sequence ID" value="NM_001164316.1"/>
</dbReference>
<dbReference type="RefSeq" id="NP_899133.2">
    <molecule id="Q8C0C4-1"/>
    <property type="nucleotide sequence ID" value="NM_183310.2"/>
</dbReference>
<dbReference type="RefSeq" id="XP_006506017.1">
    <molecule id="Q8C0C4-3"/>
    <property type="nucleotide sequence ID" value="XM_006505954.3"/>
</dbReference>
<dbReference type="SMR" id="Q8C0C4"/>
<dbReference type="FunCoup" id="Q8C0C4">
    <property type="interactions" value="44"/>
</dbReference>
<dbReference type="STRING" id="10090.ENSMUSP00000122894"/>
<dbReference type="GlyGen" id="Q8C0C4">
    <property type="glycosylation" value="1 site, 1 N-linked glycan (1 site)"/>
</dbReference>
<dbReference type="iPTMnet" id="Q8C0C4"/>
<dbReference type="PhosphoSitePlus" id="Q8C0C4"/>
<dbReference type="jPOST" id="Q8C0C4"/>
<dbReference type="PaxDb" id="10090-ENSMUSP00000122894"/>
<dbReference type="ProteomicsDB" id="279953">
    <molecule id="Q8C0C4-1"/>
</dbReference>
<dbReference type="ProteomicsDB" id="279954">
    <molecule id="Q8C0C4-2"/>
</dbReference>
<dbReference type="ProteomicsDB" id="279955">
    <molecule id="Q8C0C4-3"/>
</dbReference>
<dbReference type="Antibodypedia" id="44922">
    <property type="antibodies" value="77 antibodies from 16 providers"/>
</dbReference>
<dbReference type="Ensembl" id="ENSMUST00000045522.13">
    <molecule id="Q8C0C4-1"/>
    <property type="protein sequence ID" value="ENSMUSP00000040251.7"/>
    <property type="gene ID" value="ENSMUSG00000039578.18"/>
</dbReference>
<dbReference type="Ensembl" id="ENSMUST00000126214.8">
    <molecule id="Q8C0C4-1"/>
    <property type="protein sequence ID" value="ENSMUSP00000122894.2"/>
    <property type="gene ID" value="ENSMUSG00000039578.18"/>
</dbReference>
<dbReference type="GeneID" id="232035"/>
<dbReference type="KEGG" id="mmu:232035"/>
<dbReference type="UCSC" id="uc009cdu.2">
    <molecule id="Q8C0C4-2"/>
    <property type="organism name" value="mouse"/>
</dbReference>
<dbReference type="UCSC" id="uc009cdw.2">
    <molecule id="Q8C0C4-1"/>
    <property type="organism name" value="mouse"/>
</dbReference>
<dbReference type="AGR" id="MGI:3045354"/>
<dbReference type="CTD" id="401145"/>
<dbReference type="MGI" id="MGI:3045354">
    <property type="gene designation" value="Ccser1"/>
</dbReference>
<dbReference type="VEuPathDB" id="HostDB:ENSMUSG00000039578"/>
<dbReference type="eggNOG" id="ENOG502QXW4">
    <property type="taxonomic scope" value="Eukaryota"/>
</dbReference>
<dbReference type="GeneTree" id="ENSGT00940000153912"/>
<dbReference type="HOGENOM" id="CLU_011774_0_0_1"/>
<dbReference type="InParanoid" id="Q8C0C4"/>
<dbReference type="OMA" id="TDWPLQG"/>
<dbReference type="OrthoDB" id="10046062at2759"/>
<dbReference type="PhylomeDB" id="Q8C0C4"/>
<dbReference type="TreeFam" id="TF331021"/>
<dbReference type="BioGRID-ORCS" id="232035">
    <property type="hits" value="2 hits in 76 CRISPR screens"/>
</dbReference>
<dbReference type="ChiTaRS" id="Ccser1">
    <property type="organism name" value="mouse"/>
</dbReference>
<dbReference type="PRO" id="PR:Q8C0C4"/>
<dbReference type="Proteomes" id="UP000000589">
    <property type="component" value="Chromosome 6"/>
</dbReference>
<dbReference type="RNAct" id="Q8C0C4">
    <property type="molecule type" value="protein"/>
</dbReference>
<dbReference type="Bgee" id="ENSMUSG00000039578">
    <property type="expression patterns" value="Expressed in animal zygote and 198 other cell types or tissues"/>
</dbReference>
<dbReference type="ExpressionAtlas" id="Q8C0C4">
    <property type="expression patterns" value="baseline and differential"/>
</dbReference>
<dbReference type="InterPro" id="IPR029627">
    <property type="entry name" value="CCSER"/>
</dbReference>
<dbReference type="PANTHER" id="PTHR22461:SF1">
    <property type="entry name" value="SERINE-RICH COILED-COIL DOMAIN-CONTAINING PROTEIN 1"/>
    <property type="match status" value="1"/>
</dbReference>
<dbReference type="PANTHER" id="PTHR22461">
    <property type="entry name" value="SERINE-RICH COILED-COIL DOMAIN-CONTAINING PROTEIN 2-RELATED"/>
    <property type="match status" value="1"/>
</dbReference>
<accession>Q8C0C4</accession>
<accession>Q3KN97</accession>
<accession>Q69ZD5</accession>
<accession>Q8C822</accession>
<sequence length="895" mass="98217">MGDSGSRRCTLVSRLPIFRKSINRRHDSLPSSPSSSNTAGVHSSSPSSTNSSSGSTGKRRSIFRAPSISFHHKKGSEPKPEPTEQNLSISNGAQPSHSNMQKLSLEEHVKTRGRHSVGFSSSRSKKITRSLTEDFEREKEPSTNKNVFINCLSSGRSEGDDSGFTEEQSRRSIKQSTKKLLPKSFSSHYKFCKSVPQSQSTSLIQQPEFSLAIAQYQEQEAALGRPSPSCSVDVTERAGSSLQSPLLSADLTTAQTPSEFLALTEDSLSEADAFPKSGSTASHCDNFGHNDATSQPTSSLTAVSKTKMEFVGTAPCVMSPGRYRLEGRCSTELHSSPETPAGNRREVSLQSTELSVGNGSDPETHLPAHHQRGESPLAHAGEPALRTGSPRTLGSYDQHKALAERFKGVHPVSDSRVIPSSGDHVFNKTSYGYEASAAKVLASSLSPYREGRYIERRLRSSSEGTAGSSRMVLKPKDGHVEASSLRKHRTGSSSSKMNSLDVLNHLGSCELDEDDLMLDLEFLEEQNLQPPVCREDSCHSVMSCTAVLLSPVDPGKEVNMLEEPKCPEPSKQNLSLRITKDTDQEARCSHVSCMPNSPSADWPQQGVEENGGIDSLPFRLMLQECTAVKTLLLKMKRVLQESDVSPSSSTTSLPISPLTEEPLPFKDITRDECSMLRLQLKDRDELISQLQAELEKVQHLQKAFASRVDKSTQTELLGCDGLSLKRLEAVQGGRETTHRNRTMSQSHSTRDRKAIHTPTEDRFRYSTADQTSPYKNICQLPGLCLSNFLKDKELGGVMKHTRGNHEAVTSEMTQNSRTTMGQSFLKAAAKPEGLPMFSEKPKDPAALSRQHSTFTGRFGQPPRGPISLHTYSRKNVFLHHNLHTTEFQTLGQQDG</sequence>
<gene>
    <name type="primary">Ccser1</name>
    <name type="synonym">Fam190a</name>
    <name type="synonym">Kiaa1680</name>
</gene>